<comment type="function">
    <text evidence="4 5">Dual-function peptide with antimicrobial and potassium channel-blocking activities (PubMed:26817841). Shows inhibitory activity against Gram-positive bacteria such as S.aureus, B.subtilis, and M.luteus as well as methicillin-resistant S.aureus (MIC=0.1-20 uM) (PubMed:26817841). Does not act on bacteria by disrupting membranes (PubMed:26817841). Also moderately inhibits Kv1.1/KCNA1 (25.2% inhibition at 1 uM), Kv1.2/KCNA2 (30.5% inhibition at 1 uM), and Kv1.3/KCNA3 potassium channels (IC(50)=510.2 nM, 61% inhibition at 1 uM) (PubMed:26817841). Inhibits potassium channels by interacting with the pore region (PubMed:26817841). Does not show hemolytic activity (PubMed:27128943). In vitro, dose-dependently decreases the production of Hepatitis B virus (HBV) DNA and HBV viral proteins in both culture medium and cell lysate (PubMed:27128943).</text>
</comment>
<comment type="subcellular location">
    <subcellularLocation>
        <location evidence="8">Secreted</location>
    </subcellularLocation>
</comment>
<comment type="domain">
    <text evidence="9">Has the structural arrangement of an alpha-helix connected to a beta-sheet by disulfide bonds (CSalpha/beta).</text>
</comment>
<comment type="miscellaneous">
    <text evidence="4">Negative results: has no inhibitory activity against Gram-negative bacteria (PubMed:26817841). Shows very weak inhibition of the potassium currents mediated by the Kv11.1/KCNH2/ERG1 (11.6%), KCa3.1/KCNN4/IK/SK4 (3.9%), KCa2.3/KCNN3/SK3 (7%), Kv7/KCNQ (5.9%), when tested at 1 uM (PubMed:26817841).</text>
</comment>
<comment type="similarity">
    <text evidence="7">Belongs to the invertebrate defensin family. Type 2 subfamily.</text>
</comment>
<accession>P0DQT9</accession>
<dbReference type="SMR" id="P0DQT9"/>
<dbReference type="GO" id="GO:0005576">
    <property type="term" value="C:extracellular region"/>
    <property type="evidence" value="ECO:0007669"/>
    <property type="project" value="UniProtKB-SubCell"/>
</dbReference>
<dbReference type="GO" id="GO:0015459">
    <property type="term" value="F:potassium channel regulator activity"/>
    <property type="evidence" value="ECO:0007669"/>
    <property type="project" value="UniProtKB-KW"/>
</dbReference>
<dbReference type="GO" id="GO:0090729">
    <property type="term" value="F:toxin activity"/>
    <property type="evidence" value="ECO:0007669"/>
    <property type="project" value="UniProtKB-KW"/>
</dbReference>
<dbReference type="GO" id="GO:0042742">
    <property type="term" value="P:defense response to bacterium"/>
    <property type="evidence" value="ECO:0007669"/>
    <property type="project" value="UniProtKB-KW"/>
</dbReference>
<dbReference type="GO" id="GO:0045087">
    <property type="term" value="P:innate immune response"/>
    <property type="evidence" value="ECO:0007669"/>
    <property type="project" value="UniProtKB-KW"/>
</dbReference>
<dbReference type="Gene3D" id="3.30.30.10">
    <property type="entry name" value="Knottin, scorpion toxin-like"/>
    <property type="match status" value="1"/>
</dbReference>
<dbReference type="InterPro" id="IPR001542">
    <property type="entry name" value="Defensin_invertebrate/fungal"/>
</dbReference>
<dbReference type="InterPro" id="IPR036574">
    <property type="entry name" value="Scorpion_toxin-like_sf"/>
</dbReference>
<dbReference type="Pfam" id="PF01097">
    <property type="entry name" value="Defensin_2"/>
    <property type="match status" value="1"/>
</dbReference>
<dbReference type="SUPFAM" id="SSF57095">
    <property type="entry name" value="Scorpion toxin-like"/>
    <property type="match status" value="1"/>
</dbReference>
<dbReference type="PROSITE" id="PS51378">
    <property type="entry name" value="INVERT_DEFENSINS"/>
    <property type="match status" value="1"/>
</dbReference>
<organism>
    <name type="scientific">Olivierus martensii</name>
    <name type="common">Manchurian scorpion</name>
    <name type="synonym">Mesobuthus martensii</name>
    <dbReference type="NCBI Taxonomy" id="34649"/>
    <lineage>
        <taxon>Eukaryota</taxon>
        <taxon>Metazoa</taxon>
        <taxon>Ecdysozoa</taxon>
        <taxon>Arthropoda</taxon>
        <taxon>Chelicerata</taxon>
        <taxon>Arachnida</taxon>
        <taxon>Scorpiones</taxon>
        <taxon>Buthida</taxon>
        <taxon>Buthoidea</taxon>
        <taxon>Buthidae</taxon>
        <taxon>Olivierus</taxon>
    </lineage>
</organism>
<evidence type="ECO:0000250" key="1">
    <source>
        <dbReference type="UniProtKB" id="A0A384E0Y8"/>
    </source>
</evidence>
<evidence type="ECO:0000250" key="2">
    <source>
        <dbReference type="UniProtKB" id="P41965"/>
    </source>
</evidence>
<evidence type="ECO:0000255" key="3"/>
<evidence type="ECO:0000269" key="4">
    <source>
    </source>
</evidence>
<evidence type="ECO:0000269" key="5">
    <source>
    </source>
</evidence>
<evidence type="ECO:0000303" key="6">
    <source>
    </source>
</evidence>
<evidence type="ECO:0000305" key="7"/>
<evidence type="ECO:0000305" key="8">
    <source>
    </source>
</evidence>
<evidence type="ECO:0000305" key="9">
    <source>
    </source>
</evidence>
<keyword id="KW-0044">Antibiotic</keyword>
<keyword id="KW-0929">Antimicrobial</keyword>
<keyword id="KW-1221">Calcium-activated potassium channel impairing toxin</keyword>
<keyword id="KW-0211">Defensin</keyword>
<keyword id="KW-1015">Disulfide bond</keyword>
<keyword id="KW-0391">Immunity</keyword>
<keyword id="KW-0399">Innate immunity</keyword>
<keyword id="KW-0872">Ion channel impairing toxin</keyword>
<keyword id="KW-0528">Neurotoxin</keyword>
<keyword id="KW-0632">Potassium channel impairing toxin</keyword>
<keyword id="KW-0964">Secreted</keyword>
<keyword id="KW-0732">Signal</keyword>
<keyword id="KW-0800">Toxin</keyword>
<keyword id="KW-1220">Voltage-gated potassium channel impairing toxin</keyword>
<feature type="signal peptide" evidence="3">
    <location>
        <begin position="1"/>
        <end position="24"/>
    </location>
</feature>
<feature type="chain" id="PRO_0000455528" description="Defensin BmKDfsin4" evidence="8">
    <location>
        <begin position="25"/>
        <end position="62"/>
    </location>
</feature>
<feature type="site" description="Key residue in interaction with Kv1.3/KCNA3" evidence="4">
    <location>
        <position position="37"/>
    </location>
</feature>
<feature type="site" description="Key residue in interaction with Kv1.3/KCNA3" evidence="4">
    <location>
        <position position="43"/>
    </location>
</feature>
<feature type="disulfide bond" evidence="1">
    <location>
        <begin position="28"/>
        <end position="49"/>
    </location>
</feature>
<feature type="disulfide bond" evidence="1">
    <location>
        <begin position="35"/>
        <end position="57"/>
    </location>
</feature>
<feature type="disulfide bond" evidence="1">
    <location>
        <begin position="39"/>
        <end position="59"/>
    </location>
</feature>
<feature type="mutagenesis site" description="Important decrease in ability to block Kv1.3/KCNA3 potassium channel." evidence="4">
    <original>K</original>
    <variation>A</variation>
    <location>
        <position position="37"/>
    </location>
</feature>
<feature type="mutagenesis site" description="Important decrease in ability to block Kv1.3/KCNA3 potassium channel." evidence="4">
    <original>R</original>
    <variation>A</variation>
    <location>
        <position position="43"/>
    </location>
</feature>
<feature type="mutagenesis site" description="Moderate decrease in abmility to block Kv1.3/KCNA3 potassium channel." evidence="4">
    <original>R</original>
    <variation>A</variation>
    <location>
        <position position="44"/>
    </location>
</feature>
<feature type="mutagenesis site" description="Moderate decrease in ability to block Kv1.3/KCNA3 potassium channel." evidence="4">
    <original>R</original>
    <variation>A</variation>
    <location>
        <position position="45"/>
    </location>
</feature>
<feature type="mutagenesis site" description="Moderate decrease in ability to block Kv1.3/KCNA3 potassium channel." evidence="4">
    <original>R</original>
    <variation>A</variation>
    <location>
        <position position="61"/>
    </location>
</feature>
<sequence length="62" mass="7074">MKTIVLLFVLALVFCTLEMGIVEAGFGCPFNQGQCHKHCQSIRRRGGYCDGFLKQRCVCYRK</sequence>
<name>DEF4_OLIMR</name>
<reference key="1">
    <citation type="journal article" date="2013" name="Nat. Commun.">
        <title>The genome of Mesobuthus martensii reveals a unique adaptation model of arthropods.</title>
        <authorList>
            <person name="Cao Z."/>
            <person name="Yu Y."/>
            <person name="Wu Y."/>
            <person name="Hao P."/>
            <person name="Di Z."/>
            <person name="He Y."/>
            <person name="Chen Z."/>
            <person name="Yang W."/>
            <person name="Shen Z."/>
            <person name="He X."/>
            <person name="Sheng J."/>
            <person name="Xu X."/>
            <person name="Pan B."/>
            <person name="Feng J."/>
            <person name="Yang X."/>
            <person name="Hong W."/>
            <person name="Zhao W."/>
            <person name="Li Z."/>
            <person name="Huang K."/>
            <person name="Li T."/>
            <person name="Kong Y."/>
            <person name="Liu H."/>
            <person name="Jiang D."/>
            <person name="Zhang B."/>
            <person name="Hu J."/>
            <person name="Hu Y."/>
            <person name="Wang B."/>
            <person name="Dai J."/>
            <person name="Yuan B."/>
            <person name="Feng Y."/>
            <person name="Huang W."/>
            <person name="Xing X."/>
            <person name="Zhao G."/>
            <person name="Li X."/>
            <person name="Li Y."/>
            <person name="Li W."/>
        </authorList>
    </citation>
    <scope>NUCLEOTIDE SEQUENCE [LARGE SCALE GENOMIC DNA]</scope>
    <source>
        <tissue>Muscle</tissue>
    </source>
</reference>
<reference key="2">
    <citation type="journal article" date="2016" name="J. Biol. Chem.">
        <title>Scorpion potassium channel-blocking defensin highlights a functional link with neurotoxin.</title>
        <authorList>
            <person name="Meng L."/>
            <person name="Xie Z."/>
            <person name="Zhang Q."/>
            <person name="Li Y."/>
            <person name="Yang F."/>
            <person name="Chen Z."/>
            <person name="Li W."/>
            <person name="Cao Z."/>
            <person name="Wu Y."/>
        </authorList>
    </citation>
    <scope>FUNCTION</scope>
    <scope>3D-STRUCTURE MODELING</scope>
    <scope>RECOMBINANT EXPRESSION</scope>
    <scope>MUTAGENESIS OF LYS-37; ARG-43; ARG-44; ARG-45 AND ARG-61</scope>
</reference>
<reference key="3">
    <citation type="journal article" date="2016" name="Toxins">
        <title>A scorpion defensin BmKDfsin4 inhibits hepatitis B virus replication in vitro.</title>
        <authorList>
            <person name="Zeng Z."/>
            <person name="Zhang Q."/>
            <person name="Hong W."/>
            <person name="Xie Y."/>
            <person name="Liu Y."/>
            <person name="Li W."/>
            <person name="Wu Y."/>
            <person name="Cao Z."/>
        </authorList>
    </citation>
    <scope>FUNCTION</scope>
    <scope>RECOMBINANT EXPRESSION</scope>
</reference>
<protein>
    <recommendedName>
        <fullName evidence="6">Defensin BmKDfsin4</fullName>
    </recommendedName>
    <alternativeName>
        <fullName evidence="2">4 kDa defensin</fullName>
    </alternativeName>
</protein>
<proteinExistence type="evidence at protein level"/>